<accession>Q9Y6Z4</accession>
<accession>Q2M1U8</accession>
<accession>Q5SZV0</accession>
<accession>Q5SZV1</accession>
<accession>Q9Y6Z3</accession>
<feature type="chain" id="PRO_0000089508" description="Putative uncharacterized protein KIF25-AS1">
    <location>
        <begin position="1"/>
        <end position="181"/>
    </location>
</feature>
<feature type="region of interest" description="Disordered" evidence="1">
    <location>
        <begin position="162"/>
        <end position="181"/>
    </location>
</feature>
<feature type="splice variant" id="VSP_007375" description="In isoform 2." evidence="4">
    <original>MGDIFKNNGVLQGRLRAVACAPHCFGPRLRCLHHDQGLTELAWGTWPHSHPVRHQPQMPSARECCSIVCMAAKEVSAPKAPGSPW</original>
    <variation>MESSRAGCVLWPVLLTALDPGCAVSTTTKDSQSSPGGPGPTVTPSVISLKCHQPVNAAPSSAWQPRR</variation>
    <location>
        <begin position="1"/>
        <end position="85"/>
    </location>
</feature>
<feature type="sequence variant" id="VAR_033051" description="In dbSNP:rs9355149.">
    <original>H</original>
    <variation>D</variation>
    <location>
        <position position="23"/>
    </location>
</feature>
<feature type="sequence variant" id="VAR_033052" description="In dbSNP:rs2516801." evidence="2 3">
    <original>C</original>
    <variation>R</variation>
    <location>
        <position position="24"/>
    </location>
</feature>
<feature type="sequence variant" id="VAR_033053" description="In dbSNP:rs9364382.">
    <original>Q</original>
    <variation>E</variation>
    <location>
        <position position="57"/>
    </location>
</feature>
<feature type="sequence conflict" description="In Ref. 1; BAA78635." evidence="5" ref="1">
    <original>L</original>
    <variation>F</variation>
    <location>
        <position position="133"/>
    </location>
</feature>
<feature type="sequence conflict" description="In Ref. 1; BAA78635." evidence="5" ref="1">
    <original>R</original>
    <variation>T</variation>
    <location>
        <position position="142"/>
    </location>
</feature>
<organism>
    <name type="scientific">Homo sapiens</name>
    <name type="common">Human</name>
    <dbReference type="NCBI Taxonomy" id="9606"/>
    <lineage>
        <taxon>Eukaryota</taxon>
        <taxon>Metazoa</taxon>
        <taxon>Chordata</taxon>
        <taxon>Craniata</taxon>
        <taxon>Vertebrata</taxon>
        <taxon>Euteleostomi</taxon>
        <taxon>Mammalia</taxon>
        <taxon>Eutheria</taxon>
        <taxon>Euarchontoglires</taxon>
        <taxon>Primates</taxon>
        <taxon>Haplorrhini</taxon>
        <taxon>Catarrhini</taxon>
        <taxon>Hominidae</taxon>
        <taxon>Homo</taxon>
    </lineage>
</organism>
<comment type="interaction">
    <interactant intactId="EBI-10329963">
        <id>Q9Y6Z4</id>
    </interactant>
    <interactant intactId="EBI-751260">
        <id>Q9BYR7</id>
        <label>KRTAP3-2</label>
    </interactant>
    <organismsDiffer>false</organismsDiffer>
    <experiments>3</experiments>
</comment>
<comment type="alternative products">
    <event type="alternative splicing"/>
    <isoform>
        <id>Q9Y6Z4-1</id>
        <name>1</name>
        <name>HGC6.1.1</name>
        <sequence type="displayed"/>
    </isoform>
    <isoform>
        <id>Q9Y6Z4-2</id>
        <name>2</name>
        <name>HGC6.1.2</name>
        <sequence type="described" ref="VSP_007375"/>
    </isoform>
</comment>
<comment type="caution">
    <text evidence="5">Product of a dubious CDS prediction. Probable non-coding RNA.</text>
</comment>
<protein>
    <recommendedName>
        <fullName>Putative uncharacterized protein KIF25-AS1</fullName>
    </recommendedName>
    <alternativeName>
        <fullName>KIF25 antisense RNA 1</fullName>
    </alternativeName>
    <alternativeName>
        <fullName>KIF25 antisense gene protein 1</fullName>
    </alternativeName>
    <alternativeName>
        <fullName>Protein HGC6.1</fullName>
    </alternativeName>
</protein>
<evidence type="ECO:0000256" key="1">
    <source>
        <dbReference type="SAM" id="MobiDB-lite"/>
    </source>
</evidence>
<evidence type="ECO:0000269" key="2">
    <source>
    </source>
</evidence>
<evidence type="ECO:0000269" key="3">
    <source>
    </source>
</evidence>
<evidence type="ECO:0000303" key="4">
    <source>
    </source>
</evidence>
<evidence type="ECO:0000305" key="5"/>
<gene>
    <name type="primary">KIF25-AS1</name>
    <name type="synonym">C6orf54</name>
    <name type="synonym">NCRNA00300</name>
</gene>
<reference key="1">
    <citation type="journal article" date="1999" name="DNA Res.">
        <title>Complete DNA sequence and characterization of a 330-kb VNTR-rich region on chromosome 6q27 that is commonly deleted in ovarian cancer.</title>
        <authorList>
            <person name="Minaguchi T."/>
            <person name="Matsushima M."/>
            <person name="Saito S."/>
            <person name="Kanamori Y."/>
            <person name="Shirahama S."/>
            <person name="Okamoto S."/>
            <person name="Minami M."/>
            <person name="Taketani Y."/>
            <person name="Nakamura Y."/>
        </authorList>
    </citation>
    <scope>NUCLEOTIDE SEQUENCE [MRNA] (ISOFORMS 1 AND 2)</scope>
    <scope>VARIANT ARG-24</scope>
    <source>
        <tissue>Skeletal muscle</tissue>
    </source>
</reference>
<reference key="2">
    <citation type="journal article" date="2003" name="Nature">
        <title>The DNA sequence and analysis of human chromosome 6.</title>
        <authorList>
            <person name="Mungall A.J."/>
            <person name="Palmer S.A."/>
            <person name="Sims S.K."/>
            <person name="Edwards C.A."/>
            <person name="Ashurst J.L."/>
            <person name="Wilming L."/>
            <person name="Jones M.C."/>
            <person name="Horton R."/>
            <person name="Hunt S.E."/>
            <person name="Scott C.E."/>
            <person name="Gilbert J.G.R."/>
            <person name="Clamp M.E."/>
            <person name="Bethel G."/>
            <person name="Milne S."/>
            <person name="Ainscough R."/>
            <person name="Almeida J.P."/>
            <person name="Ambrose K.D."/>
            <person name="Andrews T.D."/>
            <person name="Ashwell R.I.S."/>
            <person name="Babbage A.K."/>
            <person name="Bagguley C.L."/>
            <person name="Bailey J."/>
            <person name="Banerjee R."/>
            <person name="Barker D.J."/>
            <person name="Barlow K.F."/>
            <person name="Bates K."/>
            <person name="Beare D.M."/>
            <person name="Beasley H."/>
            <person name="Beasley O."/>
            <person name="Bird C.P."/>
            <person name="Blakey S.E."/>
            <person name="Bray-Allen S."/>
            <person name="Brook J."/>
            <person name="Brown A.J."/>
            <person name="Brown J.Y."/>
            <person name="Burford D.C."/>
            <person name="Burrill W."/>
            <person name="Burton J."/>
            <person name="Carder C."/>
            <person name="Carter N.P."/>
            <person name="Chapman J.C."/>
            <person name="Clark S.Y."/>
            <person name="Clark G."/>
            <person name="Clee C.M."/>
            <person name="Clegg S."/>
            <person name="Cobley V."/>
            <person name="Collier R.E."/>
            <person name="Collins J.E."/>
            <person name="Colman L.K."/>
            <person name="Corby N.R."/>
            <person name="Coville G.J."/>
            <person name="Culley K.M."/>
            <person name="Dhami P."/>
            <person name="Davies J."/>
            <person name="Dunn M."/>
            <person name="Earthrowl M.E."/>
            <person name="Ellington A.E."/>
            <person name="Evans K.A."/>
            <person name="Faulkner L."/>
            <person name="Francis M.D."/>
            <person name="Frankish A."/>
            <person name="Frankland J."/>
            <person name="French L."/>
            <person name="Garner P."/>
            <person name="Garnett J."/>
            <person name="Ghori M.J."/>
            <person name="Gilby L.M."/>
            <person name="Gillson C.J."/>
            <person name="Glithero R.J."/>
            <person name="Grafham D.V."/>
            <person name="Grant M."/>
            <person name="Gribble S."/>
            <person name="Griffiths C."/>
            <person name="Griffiths M.N.D."/>
            <person name="Hall R."/>
            <person name="Halls K.S."/>
            <person name="Hammond S."/>
            <person name="Harley J.L."/>
            <person name="Hart E.A."/>
            <person name="Heath P.D."/>
            <person name="Heathcott R."/>
            <person name="Holmes S.J."/>
            <person name="Howden P.J."/>
            <person name="Howe K.L."/>
            <person name="Howell G.R."/>
            <person name="Huckle E."/>
            <person name="Humphray S.J."/>
            <person name="Humphries M.D."/>
            <person name="Hunt A.R."/>
            <person name="Johnson C.M."/>
            <person name="Joy A.A."/>
            <person name="Kay M."/>
            <person name="Keenan S.J."/>
            <person name="Kimberley A.M."/>
            <person name="King A."/>
            <person name="Laird G.K."/>
            <person name="Langford C."/>
            <person name="Lawlor S."/>
            <person name="Leongamornlert D.A."/>
            <person name="Leversha M."/>
            <person name="Lloyd C.R."/>
            <person name="Lloyd D.M."/>
            <person name="Loveland J.E."/>
            <person name="Lovell J."/>
            <person name="Martin S."/>
            <person name="Mashreghi-Mohammadi M."/>
            <person name="Maslen G.L."/>
            <person name="Matthews L."/>
            <person name="McCann O.T."/>
            <person name="McLaren S.J."/>
            <person name="McLay K."/>
            <person name="McMurray A."/>
            <person name="Moore M.J.F."/>
            <person name="Mullikin J.C."/>
            <person name="Niblett D."/>
            <person name="Nickerson T."/>
            <person name="Novik K.L."/>
            <person name="Oliver K."/>
            <person name="Overton-Larty E.K."/>
            <person name="Parker A."/>
            <person name="Patel R."/>
            <person name="Pearce A.V."/>
            <person name="Peck A.I."/>
            <person name="Phillimore B.J.C.T."/>
            <person name="Phillips S."/>
            <person name="Plumb R.W."/>
            <person name="Porter K.M."/>
            <person name="Ramsey Y."/>
            <person name="Ranby S.A."/>
            <person name="Rice C.M."/>
            <person name="Ross M.T."/>
            <person name="Searle S.M."/>
            <person name="Sehra H.K."/>
            <person name="Sheridan E."/>
            <person name="Skuce C.D."/>
            <person name="Smith S."/>
            <person name="Smith M."/>
            <person name="Spraggon L."/>
            <person name="Squares S.L."/>
            <person name="Steward C.A."/>
            <person name="Sycamore N."/>
            <person name="Tamlyn-Hall G."/>
            <person name="Tester J."/>
            <person name="Theaker A.J."/>
            <person name="Thomas D.W."/>
            <person name="Thorpe A."/>
            <person name="Tracey A."/>
            <person name="Tromans A."/>
            <person name="Tubby B."/>
            <person name="Wall M."/>
            <person name="Wallis J.M."/>
            <person name="West A.P."/>
            <person name="White S.S."/>
            <person name="Whitehead S.L."/>
            <person name="Whittaker H."/>
            <person name="Wild A."/>
            <person name="Willey D.J."/>
            <person name="Wilmer T.E."/>
            <person name="Wood J.M."/>
            <person name="Wray P.W."/>
            <person name="Wyatt J.C."/>
            <person name="Young L."/>
            <person name="Younger R.M."/>
            <person name="Bentley D.R."/>
            <person name="Coulson A."/>
            <person name="Durbin R.M."/>
            <person name="Hubbard T."/>
            <person name="Sulston J.E."/>
            <person name="Dunham I."/>
            <person name="Rogers J."/>
            <person name="Beck S."/>
        </authorList>
    </citation>
    <scope>NUCLEOTIDE SEQUENCE [LARGE SCALE GENOMIC DNA]</scope>
</reference>
<reference key="3">
    <citation type="journal article" date="2004" name="Genome Res.">
        <title>The status, quality, and expansion of the NIH full-length cDNA project: the Mammalian Gene Collection (MGC).</title>
        <authorList>
            <consortium name="The MGC Project Team"/>
        </authorList>
    </citation>
    <scope>NUCLEOTIDE SEQUENCE [LARGE SCALE MRNA] (ISOFORM 1)</scope>
    <scope>VARIANT ARG-24</scope>
</reference>
<proteinExistence type="uncertain"/>
<keyword id="KW-0025">Alternative splicing</keyword>
<keyword id="KW-1185">Reference proteome</keyword>
<name>KIAS1_HUMAN</name>
<sequence length="181" mass="19411">MGDIFKNNGVLQGRLRAVACAPHCFGPRLRCLHHDQGLTELAWGTWPHSHPVRHQPQMPSARECCSIVCMAAKEVSAPKAPGSPWMVPGDVAMSGHRVGALDERGHPNPQTGHCRGGSVSVTWSSVSCCRGRLAAVRVMIARDPSTCHLAKGCSPAWGFLPQARGPAGTRTPQRRCSSHEA</sequence>
<dbReference type="EMBL" id="AB016899">
    <property type="protein sequence ID" value="BAA78634.1"/>
    <property type="molecule type" value="mRNA"/>
</dbReference>
<dbReference type="EMBL" id="AB016900">
    <property type="protein sequence ID" value="BAA78635.1"/>
    <property type="molecule type" value="mRNA"/>
</dbReference>
<dbReference type="EMBL" id="AL589733">
    <property type="status" value="NOT_ANNOTATED_CDS"/>
    <property type="molecule type" value="Genomic_DNA"/>
</dbReference>
<dbReference type="EMBL" id="BC112215">
    <property type="status" value="NOT_ANNOTATED_CDS"/>
    <property type="molecule type" value="mRNA"/>
</dbReference>
<dbReference type="IntAct" id="Q9Y6Z4">
    <property type="interactions" value="1"/>
</dbReference>
<dbReference type="BioMuta" id="HGNC:20953"/>
<dbReference type="MassIVE" id="Q9Y6Z4"/>
<dbReference type="PeptideAtlas" id="Q9Y6Z4"/>
<dbReference type="AGR" id="HGNC:20953"/>
<dbReference type="GeneCards" id="KIF25-AS1"/>
<dbReference type="HGNC" id="HGNC:20953">
    <property type="gene designation" value="KIF25-AS1"/>
</dbReference>
<dbReference type="neXtProt" id="NX_Q9Y6Z4"/>
<dbReference type="InParanoid" id="Q9Y6Z4"/>
<dbReference type="PAN-GO" id="Q9Y6Z4">
    <property type="GO annotations" value="0 GO annotations based on evolutionary models"/>
</dbReference>
<dbReference type="PathwayCommons" id="Q9Y6Z4"/>
<dbReference type="ChiTaRS" id="KIF25-AS1">
    <property type="organism name" value="human"/>
</dbReference>
<dbReference type="Pharos" id="Q9Y6Z4">
    <property type="development level" value="Tdark"/>
</dbReference>
<dbReference type="Proteomes" id="UP000005640">
    <property type="component" value="Unplaced"/>
</dbReference>
<dbReference type="RNAct" id="Q9Y6Z4">
    <property type="molecule type" value="protein"/>
</dbReference>